<comment type="function">
    <text evidence="1">Inhibits all the catalytic activities of DNA gyrase by preventing its interaction with DNA. Acts by binding directly to the C-terminal domain of GyrB, which probably disrupts DNA binding by the gyrase.</text>
</comment>
<comment type="cofactor">
    <cofactor evidence="1">
        <name>Zn(2+)</name>
        <dbReference type="ChEBI" id="CHEBI:29105"/>
    </cofactor>
    <text evidence="1">Binds 1 zinc ion.</text>
</comment>
<comment type="subunit">
    <text evidence="1">Interacts with GyrB.</text>
</comment>
<comment type="similarity">
    <text evidence="1">Belongs to the DNA gyrase inhibitor YacG family.</text>
</comment>
<accession>Q3SGD2</accession>
<organism>
    <name type="scientific">Thiobacillus denitrificans (strain ATCC 25259 / T1)</name>
    <dbReference type="NCBI Taxonomy" id="292415"/>
    <lineage>
        <taxon>Bacteria</taxon>
        <taxon>Pseudomonadati</taxon>
        <taxon>Pseudomonadota</taxon>
        <taxon>Betaproteobacteria</taxon>
        <taxon>Nitrosomonadales</taxon>
        <taxon>Thiobacillaceae</taxon>
        <taxon>Thiobacillus</taxon>
    </lineage>
</organism>
<dbReference type="EMBL" id="CP000116">
    <property type="protein sequence ID" value="AAZ98318.1"/>
    <property type="molecule type" value="Genomic_DNA"/>
</dbReference>
<dbReference type="RefSeq" id="WP_011312877.1">
    <property type="nucleotide sequence ID" value="NC_007404.1"/>
</dbReference>
<dbReference type="SMR" id="Q3SGD2"/>
<dbReference type="STRING" id="292415.Tbd_2365"/>
<dbReference type="KEGG" id="tbd:Tbd_2365"/>
<dbReference type="eggNOG" id="COG3024">
    <property type="taxonomic scope" value="Bacteria"/>
</dbReference>
<dbReference type="HOGENOM" id="CLU_178280_1_0_4"/>
<dbReference type="OrthoDB" id="9809663at2"/>
<dbReference type="Proteomes" id="UP000008291">
    <property type="component" value="Chromosome"/>
</dbReference>
<dbReference type="GO" id="GO:0008657">
    <property type="term" value="F:DNA topoisomerase type II (double strand cut, ATP-hydrolyzing) inhibitor activity"/>
    <property type="evidence" value="ECO:0007669"/>
    <property type="project" value="UniProtKB-UniRule"/>
</dbReference>
<dbReference type="GO" id="GO:0008270">
    <property type="term" value="F:zinc ion binding"/>
    <property type="evidence" value="ECO:0007669"/>
    <property type="project" value="UniProtKB-UniRule"/>
</dbReference>
<dbReference type="GO" id="GO:0006355">
    <property type="term" value="P:regulation of DNA-templated transcription"/>
    <property type="evidence" value="ECO:0007669"/>
    <property type="project" value="InterPro"/>
</dbReference>
<dbReference type="Gene3D" id="3.30.50.10">
    <property type="entry name" value="Erythroid Transcription Factor GATA-1, subunit A"/>
    <property type="match status" value="1"/>
</dbReference>
<dbReference type="HAMAP" id="MF_00649">
    <property type="entry name" value="DNA_gyrase_inhibitor_YacG"/>
    <property type="match status" value="1"/>
</dbReference>
<dbReference type="InterPro" id="IPR005584">
    <property type="entry name" value="DNA_gyrase_inhibitor_YacG"/>
</dbReference>
<dbReference type="InterPro" id="IPR013088">
    <property type="entry name" value="Znf_NHR/GATA"/>
</dbReference>
<dbReference type="PANTHER" id="PTHR36150">
    <property type="entry name" value="DNA GYRASE INHIBITOR YACG"/>
    <property type="match status" value="1"/>
</dbReference>
<dbReference type="PANTHER" id="PTHR36150:SF1">
    <property type="entry name" value="DNA GYRASE INHIBITOR YACG"/>
    <property type="match status" value="1"/>
</dbReference>
<dbReference type="Pfam" id="PF03884">
    <property type="entry name" value="YacG"/>
    <property type="match status" value="1"/>
</dbReference>
<dbReference type="SUPFAM" id="SSF57716">
    <property type="entry name" value="Glucocorticoid receptor-like (DNA-binding domain)"/>
    <property type="match status" value="1"/>
</dbReference>
<sequence length="69" mass="7841">MTNASKPPVVNCPICGATVKWLAENRWKPFCSERCKLIDLGQWATEKYRVPVEPKPDEGETPDQAERPQ</sequence>
<feature type="chain" id="PRO_1000057003" description="DNA gyrase inhibitor YacG">
    <location>
        <begin position="1"/>
        <end position="69"/>
    </location>
</feature>
<feature type="region of interest" description="Disordered" evidence="2">
    <location>
        <begin position="49"/>
        <end position="69"/>
    </location>
</feature>
<feature type="binding site" evidence="1">
    <location>
        <position position="12"/>
    </location>
    <ligand>
        <name>Zn(2+)</name>
        <dbReference type="ChEBI" id="CHEBI:29105"/>
    </ligand>
</feature>
<feature type="binding site" evidence="1">
    <location>
        <position position="15"/>
    </location>
    <ligand>
        <name>Zn(2+)</name>
        <dbReference type="ChEBI" id="CHEBI:29105"/>
    </ligand>
</feature>
<feature type="binding site" evidence="1">
    <location>
        <position position="31"/>
    </location>
    <ligand>
        <name>Zn(2+)</name>
        <dbReference type="ChEBI" id="CHEBI:29105"/>
    </ligand>
</feature>
<feature type="binding site" evidence="1">
    <location>
        <position position="35"/>
    </location>
    <ligand>
        <name>Zn(2+)</name>
        <dbReference type="ChEBI" id="CHEBI:29105"/>
    </ligand>
</feature>
<gene>
    <name evidence="1" type="primary">yacG</name>
    <name type="ordered locus">Tbd_2365</name>
</gene>
<proteinExistence type="inferred from homology"/>
<name>YACG_THIDA</name>
<reference key="1">
    <citation type="journal article" date="2006" name="J. Bacteriol.">
        <title>The genome sequence of the obligately chemolithoautotrophic, facultatively anaerobic bacterium Thiobacillus denitrificans.</title>
        <authorList>
            <person name="Beller H.R."/>
            <person name="Chain P.S."/>
            <person name="Letain T.E."/>
            <person name="Chakicherla A."/>
            <person name="Larimer F.W."/>
            <person name="Richardson P.M."/>
            <person name="Coleman M.A."/>
            <person name="Wood A.P."/>
            <person name="Kelly D.P."/>
        </authorList>
    </citation>
    <scope>NUCLEOTIDE SEQUENCE [LARGE SCALE GENOMIC DNA]</scope>
    <source>
        <strain>ATCC 25259 / T1</strain>
    </source>
</reference>
<evidence type="ECO:0000255" key="1">
    <source>
        <dbReference type="HAMAP-Rule" id="MF_00649"/>
    </source>
</evidence>
<evidence type="ECO:0000256" key="2">
    <source>
        <dbReference type="SAM" id="MobiDB-lite"/>
    </source>
</evidence>
<protein>
    <recommendedName>
        <fullName evidence="1">DNA gyrase inhibitor YacG</fullName>
    </recommendedName>
</protein>
<keyword id="KW-0479">Metal-binding</keyword>
<keyword id="KW-1185">Reference proteome</keyword>
<keyword id="KW-0862">Zinc</keyword>